<protein>
    <recommendedName>
        <fullName>Avenin-E</fullName>
    </recommendedName>
    <alternativeName>
        <fullName>Alpha-2 avenin</fullName>
    </alternativeName>
    <alternativeName>
        <fullName>Avenin N9</fullName>
    </alternativeName>
    <alternativeName>
        <fullName>Celiac immunoreactive protein 3</fullName>
        <shortName>CIP-3</shortName>
    </alternativeName>
    <alternativeName>
        <fullName>Prolamin</fullName>
    </alternativeName>
</protein>
<comment type="function">
    <text evidence="2">Seed storage protein. Serves as a source of nitrogen, carbon, and sulfur for the young developing seedling (By similarity).</text>
</comment>
<comment type="subunit">
    <text evidence="2">Monomer.</text>
</comment>
<comment type="subcellular location">
    <subcellularLocation>
        <location evidence="1">Vacuole</location>
        <location evidence="1">Aleurone grain</location>
    </subcellularLocation>
    <text evidence="1">Protein bodies inside vacuoles.</text>
</comment>
<comment type="allergen">
    <text evidence="1">Causes an allergic reaction in human. Avenins are one of the causes of celiac disease, also known as celiac sprue or gluten-sensitive enteropathy (By similarity).</text>
</comment>
<comment type="similarity">
    <text evidence="3">Belongs to the gliadin/glutenin family.</text>
</comment>
<reference evidence="8" key="1">
    <citation type="journal article" date="1982" name="Biochem. Genet.">
        <title>Cereal prolamin evolution and homology revealed by sequence analysis.</title>
        <authorList>
            <person name="Bietz J.A."/>
        </authorList>
    </citation>
    <scope>PROTEIN SEQUENCE</scope>
</reference>
<reference evidence="7" key="2">
    <citation type="journal article" date="1988" name="Bioorg. Khim.">
        <title>Primary structure of the 'fast' component of avenin (Avena sativa L.).</title>
        <authorList>
            <person name="Egorov T.A."/>
        </authorList>
    </citation>
    <scope>PROTEIN SEQUENCE</scope>
    <source>
        <strain evidence="6">cv. Narymsky 943</strain>
    </source>
</reference>
<reference evidence="7" key="3">
    <citation type="journal article" date="1987" name="Biochimie">
        <title>N-terminal sequences of oat avenins compared to other cereal prolamins.</title>
        <authorList>
            <person name="Pernollet J.-C."/>
            <person name="Huet J.-C."/>
            <person name="Galle A.-M."/>
            <person name="Sallantin M."/>
        </authorList>
    </citation>
    <scope>PROTEIN SEQUENCE OF 1-51</scope>
    <source>
        <strain evidence="5">cv. Rhea</strain>
        <tissue evidence="5">Seed</tissue>
    </source>
</reference>
<reference evidence="7 9" key="4">
    <citation type="journal article" date="1992" name="FEBS Lett.">
        <title>Identification of the three major coeliac immunoreactive proteins and one alpha-amylase inhibitor from oat endosperm.</title>
        <authorList>
            <person name="Rocher A."/>
            <person name="Colilla F."/>
            <person name="Ortiz M.L."/>
            <person name="Mendez E."/>
        </authorList>
    </citation>
    <scope>PROTEIN SEQUENCE OF 1-14</scope>
    <source>
        <tissue evidence="4">Endosperm</tissue>
    </source>
</reference>
<keyword id="KW-0020">Allergen</keyword>
<keyword id="KW-0903">Direct protein sequencing</keyword>
<keyword id="KW-0677">Repeat</keyword>
<keyword id="KW-0708">Seed storage protein</keyword>
<keyword id="KW-0758">Storage protein</keyword>
<keyword id="KW-0926">Vacuole</keyword>
<name>AVEE_AVESA</name>
<evidence type="ECO:0000250" key="1"/>
<evidence type="ECO:0000250" key="2">
    <source>
        <dbReference type="UniProtKB" id="P80356"/>
    </source>
</evidence>
<evidence type="ECO:0000255" key="3"/>
<evidence type="ECO:0000269" key="4">
    <source>
    </source>
</evidence>
<evidence type="ECO:0000269" key="5">
    <source>
    </source>
</evidence>
<evidence type="ECO:0000269" key="6">
    <source>
    </source>
</evidence>
<evidence type="ECO:0000305" key="7"/>
<evidence type="ECO:0000312" key="8">
    <source>
        <dbReference type="PIR" id="JG0015"/>
    </source>
</evidence>
<evidence type="ECO:0000312" key="9">
    <source>
        <dbReference type="PIR" id="S29209"/>
    </source>
</evidence>
<feature type="chain" id="PRO_0000239309" description="Avenin-E">
    <location>
        <begin position="1"/>
        <end position="182"/>
    </location>
</feature>
<feature type="repeat" description="1; approximate">
    <location>
        <begin position="21"/>
        <end position="26"/>
    </location>
</feature>
<feature type="repeat" description="2; approximate">
    <location>
        <begin position="27"/>
        <end position="34"/>
    </location>
</feature>
<feature type="repeat" description="3" evidence="3">
    <location>
        <begin position="35"/>
        <end position="41"/>
    </location>
</feature>
<feature type="region of interest" description="3 X 7 AA tandem repeats of P-F-V-Q-Q-Q-Q" evidence="3">
    <location>
        <begin position="21"/>
        <end position="41"/>
    </location>
</feature>
<feature type="sequence conflict" description="In Ref. 3; AA sequence." evidence="7" ref="3">
    <original>Q</original>
    <variation>QE</variation>
    <location>
        <position position="45"/>
    </location>
</feature>
<organism>
    <name type="scientific">Avena sativa</name>
    <name type="common">Oat</name>
    <dbReference type="NCBI Taxonomy" id="4498"/>
    <lineage>
        <taxon>Eukaryota</taxon>
        <taxon>Viridiplantae</taxon>
        <taxon>Streptophyta</taxon>
        <taxon>Embryophyta</taxon>
        <taxon>Tracheophyta</taxon>
        <taxon>Spermatophyta</taxon>
        <taxon>Magnoliopsida</taxon>
        <taxon>Liliopsida</taxon>
        <taxon>Poales</taxon>
        <taxon>Poaceae</taxon>
        <taxon>BOP clade</taxon>
        <taxon>Pooideae</taxon>
        <taxon>Poodae</taxon>
        <taxon>Poeae</taxon>
        <taxon>Poeae Chloroplast Group 1 (Aveneae type)</taxon>
        <taxon>Aveninae</taxon>
        <taxon>Avena</taxon>
    </lineage>
</organism>
<sequence>TTTVQYNPSEQYQPYPEQQEPFVQQQPFVQQQQQPFVQQQQMFLQPLLQQQLNPCKQFLVQQCSPVAVVPFLRSQILRQAICQVARQQCCRQLAQIPEQLRCPAIHSVVQAIILQQQQQQQFFQPQLQQQVFQPQLQQVFNQPQQQAQFEGMRAFALQALPAMCDVYVPPQCPVATAPLGGF</sequence>
<accession>Q09114</accession>
<accession>Q09096</accession>
<dbReference type="PIR" id="JG0015">
    <property type="entry name" value="JG0015"/>
</dbReference>
<dbReference type="PIR" id="S29209">
    <property type="entry name" value="S29209"/>
</dbReference>
<dbReference type="GO" id="GO:0033095">
    <property type="term" value="C:aleurone grain"/>
    <property type="evidence" value="ECO:0007669"/>
    <property type="project" value="UniProtKB-SubCell"/>
</dbReference>
<dbReference type="GO" id="GO:0005773">
    <property type="term" value="C:vacuole"/>
    <property type="evidence" value="ECO:0007669"/>
    <property type="project" value="UniProtKB-KW"/>
</dbReference>
<dbReference type="GO" id="GO:0045735">
    <property type="term" value="F:nutrient reservoir activity"/>
    <property type="evidence" value="ECO:0007669"/>
    <property type="project" value="UniProtKB-KW"/>
</dbReference>
<dbReference type="CDD" id="cd00261">
    <property type="entry name" value="AAI_SS"/>
    <property type="match status" value="1"/>
</dbReference>
<dbReference type="Gene3D" id="1.10.110.10">
    <property type="entry name" value="Plant lipid-transfer and hydrophobic proteins"/>
    <property type="match status" value="1"/>
</dbReference>
<dbReference type="InterPro" id="IPR036312">
    <property type="entry name" value="Bifun_inhib/LTP/seed_sf"/>
</dbReference>
<dbReference type="InterPro" id="IPR016140">
    <property type="entry name" value="Bifunc_inhib/LTP/seed_store"/>
</dbReference>
<dbReference type="InterPro" id="IPR001954">
    <property type="entry name" value="Glia_glutenin"/>
</dbReference>
<dbReference type="PANTHER" id="PTHR33454:SF7">
    <property type="entry name" value="ALPHA_BETA-GLIADIN MM1"/>
    <property type="match status" value="1"/>
</dbReference>
<dbReference type="PANTHER" id="PTHR33454">
    <property type="entry name" value="PROLAMIN PPROL 14P"/>
    <property type="match status" value="1"/>
</dbReference>
<dbReference type="Pfam" id="PF13016">
    <property type="entry name" value="Gliadin"/>
    <property type="match status" value="1"/>
</dbReference>
<dbReference type="PRINTS" id="PR00208">
    <property type="entry name" value="GLIADGLUTEN"/>
</dbReference>
<dbReference type="SMART" id="SM00499">
    <property type="entry name" value="AAI"/>
    <property type="match status" value="1"/>
</dbReference>
<dbReference type="SUPFAM" id="SSF47699">
    <property type="entry name" value="Bifunctional inhibitor/lipid-transfer protein/seed storage 2S albumin"/>
    <property type="match status" value="1"/>
</dbReference>
<proteinExistence type="evidence at protein level"/>